<dbReference type="EC" id="3.2.1.26"/>
<dbReference type="EMBL" id="X74514">
    <property type="protein sequence ID" value="CAA52619.1"/>
    <property type="molecule type" value="mRNA"/>
</dbReference>
<dbReference type="EMBL" id="X74515">
    <property type="protein sequence ID" value="CAA52620.1"/>
    <property type="molecule type" value="mRNA"/>
</dbReference>
<dbReference type="EMBL" id="AP001307">
    <property type="protein sequence ID" value="BAB01930.1"/>
    <property type="status" value="ALT_SEQ"/>
    <property type="molecule type" value="Genomic_DNA"/>
</dbReference>
<dbReference type="EMBL" id="CP002686">
    <property type="protein sequence ID" value="AEE75414.1"/>
    <property type="molecule type" value="Genomic_DNA"/>
</dbReference>
<dbReference type="EMBL" id="AY045776">
    <property type="protein sequence ID" value="AAK76450.1"/>
    <property type="molecule type" value="mRNA"/>
</dbReference>
<dbReference type="EMBL" id="AY079422">
    <property type="protein sequence ID" value="AAL85153.1"/>
    <property type="molecule type" value="mRNA"/>
</dbReference>
<dbReference type="PIR" id="S37212">
    <property type="entry name" value="S37212"/>
</dbReference>
<dbReference type="RefSeq" id="NP_566464.1">
    <molecule id="Q43866-1"/>
    <property type="nucleotide sequence ID" value="NM_112232.4"/>
</dbReference>
<dbReference type="PDB" id="2AC1">
    <property type="method" value="X-ray"/>
    <property type="resolution" value="2.15 A"/>
    <property type="chains" value="A=44-584"/>
</dbReference>
<dbReference type="PDB" id="2OXB">
    <property type="method" value="X-ray"/>
    <property type="resolution" value="2.60 A"/>
    <property type="chains" value="A=48-584"/>
</dbReference>
<dbReference type="PDB" id="2QQU">
    <property type="method" value="X-ray"/>
    <property type="resolution" value="2.84 A"/>
    <property type="chains" value="A=48-582"/>
</dbReference>
<dbReference type="PDB" id="2QQV">
    <property type="method" value="X-ray"/>
    <property type="resolution" value="3.01 A"/>
    <property type="chains" value="A=48-584"/>
</dbReference>
<dbReference type="PDB" id="2QQW">
    <property type="method" value="X-ray"/>
    <property type="resolution" value="2.80 A"/>
    <property type="chains" value="A=48-584"/>
</dbReference>
<dbReference type="PDB" id="2XQR">
    <property type="method" value="X-ray"/>
    <property type="resolution" value="2.58 A"/>
    <property type="chains" value="A/C/E/G/I/K=48-584"/>
</dbReference>
<dbReference type="PDBsum" id="2AC1"/>
<dbReference type="PDBsum" id="2OXB"/>
<dbReference type="PDBsum" id="2QQU"/>
<dbReference type="PDBsum" id="2QQV"/>
<dbReference type="PDBsum" id="2QQW"/>
<dbReference type="PDBsum" id="2XQR"/>
<dbReference type="SMR" id="Q43866"/>
<dbReference type="BioGRID" id="5925">
    <property type="interactions" value="1"/>
</dbReference>
<dbReference type="DIP" id="DIP-59391N"/>
<dbReference type="FunCoup" id="Q43866">
    <property type="interactions" value="231"/>
</dbReference>
<dbReference type="IntAct" id="Q43866">
    <property type="interactions" value="1"/>
</dbReference>
<dbReference type="STRING" id="3702.Q43866"/>
<dbReference type="CAZy" id="GH32">
    <property type="family name" value="Glycoside Hydrolase Family 32"/>
</dbReference>
<dbReference type="GlyCosmos" id="Q43866">
    <property type="glycosylation" value="4 sites, No reported glycans"/>
</dbReference>
<dbReference type="GlyGen" id="Q43866">
    <property type="glycosylation" value="4 sites"/>
</dbReference>
<dbReference type="PaxDb" id="3702-AT3G13790.1"/>
<dbReference type="ProteomicsDB" id="247028">
    <molecule id="Q43866-1"/>
</dbReference>
<dbReference type="EnsemblPlants" id="AT3G13790.1">
    <molecule id="Q43866-1"/>
    <property type="protein sequence ID" value="AT3G13790.1"/>
    <property type="gene ID" value="AT3G13790"/>
</dbReference>
<dbReference type="Gramene" id="AT3G13790.1">
    <molecule id="Q43866-1"/>
    <property type="protein sequence ID" value="AT3G13790.1"/>
    <property type="gene ID" value="AT3G13790"/>
</dbReference>
<dbReference type="KEGG" id="ath:AT3G13790"/>
<dbReference type="Araport" id="AT3G13790"/>
<dbReference type="TAIR" id="AT3G13790">
    <property type="gene designation" value="ATBFRUCT1"/>
</dbReference>
<dbReference type="eggNOG" id="KOG0228">
    <property type="taxonomic scope" value="Eukaryota"/>
</dbReference>
<dbReference type="HOGENOM" id="CLU_001528_6_0_1"/>
<dbReference type="InParanoid" id="Q43866"/>
<dbReference type="OrthoDB" id="202537at2759"/>
<dbReference type="PhylomeDB" id="Q43866"/>
<dbReference type="BioCyc" id="ARA:AT3G13790-MONOMER"/>
<dbReference type="BRENDA" id="3.2.1.26">
    <property type="organism ID" value="399"/>
</dbReference>
<dbReference type="SABIO-RK" id="Q43866"/>
<dbReference type="CD-CODE" id="4299E36E">
    <property type="entry name" value="Nucleolus"/>
</dbReference>
<dbReference type="EvolutionaryTrace" id="Q43866"/>
<dbReference type="PRO" id="PR:Q43866"/>
<dbReference type="Proteomes" id="UP000006548">
    <property type="component" value="Chromosome 3"/>
</dbReference>
<dbReference type="ExpressionAtlas" id="Q43866">
    <property type="expression patterns" value="baseline and differential"/>
</dbReference>
<dbReference type="GO" id="GO:0048046">
    <property type="term" value="C:apoplast"/>
    <property type="evidence" value="ECO:0007669"/>
    <property type="project" value="UniProtKB-SubCell"/>
</dbReference>
<dbReference type="GO" id="GO:0005886">
    <property type="term" value="C:plasma membrane"/>
    <property type="evidence" value="ECO:0007005"/>
    <property type="project" value="TAIR"/>
</dbReference>
<dbReference type="GO" id="GO:0004564">
    <property type="term" value="F:beta-fructofuranosidase activity"/>
    <property type="evidence" value="ECO:0000315"/>
    <property type="project" value="TAIR"/>
</dbReference>
<dbReference type="GO" id="GO:0005975">
    <property type="term" value="P:carbohydrate metabolic process"/>
    <property type="evidence" value="ECO:0007669"/>
    <property type="project" value="InterPro"/>
</dbReference>
<dbReference type="GO" id="GO:0050832">
    <property type="term" value="P:defense response to fungus"/>
    <property type="evidence" value="ECO:0000270"/>
    <property type="project" value="TAIR"/>
</dbReference>
<dbReference type="GO" id="GO:0009611">
    <property type="term" value="P:response to wounding"/>
    <property type="evidence" value="ECO:0000315"/>
    <property type="project" value="TAIR"/>
</dbReference>
<dbReference type="CDD" id="cd18624">
    <property type="entry name" value="GH32_Fruct1-like"/>
    <property type="match status" value="1"/>
</dbReference>
<dbReference type="FunFam" id="2.115.10.20:FF:000001">
    <property type="entry name" value="Beta-fructofuranosidase, insoluble isoenzyme CWINV1"/>
    <property type="match status" value="1"/>
</dbReference>
<dbReference type="FunFam" id="2.60.120.560:FF:000002">
    <property type="entry name" value="Beta-fructofuranosidase, insoluble isoenzyme CWINV1"/>
    <property type="match status" value="1"/>
</dbReference>
<dbReference type="Gene3D" id="2.60.120.560">
    <property type="entry name" value="Exo-inulinase, domain 1"/>
    <property type="match status" value="1"/>
</dbReference>
<dbReference type="Gene3D" id="2.115.10.20">
    <property type="entry name" value="Glycosyl hydrolase domain, family 43"/>
    <property type="match status" value="1"/>
</dbReference>
<dbReference type="InterPro" id="IPR013320">
    <property type="entry name" value="ConA-like_dom_sf"/>
</dbReference>
<dbReference type="InterPro" id="IPR050551">
    <property type="entry name" value="Fructan_Metab_Enzymes"/>
</dbReference>
<dbReference type="InterPro" id="IPR001362">
    <property type="entry name" value="Glyco_hydro_32"/>
</dbReference>
<dbReference type="InterPro" id="IPR018053">
    <property type="entry name" value="Glyco_hydro_32_AS"/>
</dbReference>
<dbReference type="InterPro" id="IPR013189">
    <property type="entry name" value="Glyco_hydro_32_C"/>
</dbReference>
<dbReference type="InterPro" id="IPR013148">
    <property type="entry name" value="Glyco_hydro_32_N"/>
</dbReference>
<dbReference type="InterPro" id="IPR023296">
    <property type="entry name" value="Glyco_hydro_beta-prop_sf"/>
</dbReference>
<dbReference type="PANTHER" id="PTHR31953">
    <property type="entry name" value="BETA-FRUCTOFURANOSIDASE, INSOLUBLE ISOENZYME CWINV1-RELATED"/>
    <property type="match status" value="1"/>
</dbReference>
<dbReference type="Pfam" id="PF08244">
    <property type="entry name" value="Glyco_hydro_32C"/>
    <property type="match status" value="1"/>
</dbReference>
<dbReference type="Pfam" id="PF00251">
    <property type="entry name" value="Glyco_hydro_32N"/>
    <property type="match status" value="1"/>
</dbReference>
<dbReference type="SMART" id="SM00640">
    <property type="entry name" value="Glyco_32"/>
    <property type="match status" value="1"/>
</dbReference>
<dbReference type="SUPFAM" id="SSF75005">
    <property type="entry name" value="Arabinanase/levansucrase/invertase"/>
    <property type="match status" value="1"/>
</dbReference>
<dbReference type="SUPFAM" id="SSF49899">
    <property type="entry name" value="Concanavalin A-like lectins/glucanases"/>
    <property type="match status" value="1"/>
</dbReference>
<dbReference type="PROSITE" id="PS00609">
    <property type="entry name" value="GLYCOSYL_HYDROL_F32"/>
    <property type="match status" value="1"/>
</dbReference>
<evidence type="ECO:0000255" key="1"/>
<evidence type="ECO:0000255" key="2">
    <source>
        <dbReference type="PROSITE-ProRule" id="PRU10067"/>
    </source>
</evidence>
<evidence type="ECO:0000269" key="3">
    <source>
    </source>
</evidence>
<evidence type="ECO:0000269" key="4">
    <source>
    </source>
</evidence>
<evidence type="ECO:0000269" key="5">
    <source>
    </source>
</evidence>
<evidence type="ECO:0000269" key="6">
    <source>
    </source>
</evidence>
<evidence type="ECO:0000269" key="7">
    <source>
    </source>
</evidence>
<evidence type="ECO:0000269" key="8">
    <source>
    </source>
</evidence>
<evidence type="ECO:0000269" key="9">
    <source>
    </source>
</evidence>
<evidence type="ECO:0000269" key="10">
    <source>
    </source>
</evidence>
<evidence type="ECO:0000269" key="11">
    <source ref="7"/>
</evidence>
<evidence type="ECO:0000305" key="12"/>
<evidence type="ECO:0007829" key="13">
    <source>
        <dbReference type="PDB" id="2AC1"/>
    </source>
</evidence>
<evidence type="ECO:0007829" key="14">
    <source>
        <dbReference type="PDB" id="2OXB"/>
    </source>
</evidence>
<evidence type="ECO:0007829" key="15">
    <source>
        <dbReference type="PDB" id="2QQU"/>
    </source>
</evidence>
<evidence type="ECO:0007829" key="16">
    <source>
        <dbReference type="PDB" id="2QQW"/>
    </source>
</evidence>
<sequence length="584" mass="66280">MTKEVCSNIGLWLLLTLLIGNYVVNLEASHHVYKRLTQSTNTKSPSVNQPYRTGFHFQPPKNWMNDPNGPMIYKGIYHLFYQWNPKGAVWGNIVWAHSTSTDLINWDPHPPAIFPSAPFDINGCWSGSATILPNGKPVILYTGIDPKNQQVQNIAEPKNLSDPYLREWKKSPLNPLMAPDAVNGINASSFRDPTTAWLGQDKKWRVIIGSKIHRRGLAITYTSKDFLKWEKSPEPLHYDDGSGMWECPDFFPVTRFGSNGVETSSFGEPNEILKHVLKISLDDTKHDYYTIGTYDRVKDKFVPDNGFKMDGTAPRYDYGKYYASKTFFDSAKNRRILWGWTNESSSVEDDVEKGWSGIQTIPRKIWLDRSGKQLIQWPVREVERLRTKQVKNLRNKVLKSGSRLEVYGVTAAQADVEVLFKVRDLEKADVIEPSWTDPQLICSKMNVSVKSGLGPFGLMVLASKNLEEYTSVYFRIFKARQNSNKYVVLMCSDQSRSSLKEDNDKTTYGAFVDINPHQPLSLRALIDHSVVESFGGKGRACITSRVYPKLAIGKSSHLFAFNYGYQSVDVLNLNAWSMNSAQIS</sequence>
<feature type="signal peptide" evidence="1">
    <location>
        <begin position="1"/>
        <end position="28"/>
    </location>
</feature>
<feature type="chain" id="PRO_0000348347" description="Beta-fructofuranosidase, insoluble isoenzyme CWINV1">
    <location>
        <begin position="29"/>
        <end position="584"/>
    </location>
</feature>
<feature type="active site">
    <location>
        <position position="66"/>
    </location>
</feature>
<feature type="binding site">
    <location>
        <begin position="63"/>
        <end position="66"/>
    </location>
    <ligand>
        <name>substrate</name>
    </ligand>
</feature>
<feature type="binding site">
    <location>
        <position position="82"/>
    </location>
    <ligand>
        <name>substrate</name>
    </ligand>
</feature>
<feature type="binding site">
    <location>
        <position position="90"/>
    </location>
    <ligand>
        <name>substrate</name>
    </ligand>
</feature>
<feature type="binding site">
    <location>
        <begin position="125"/>
        <end position="126"/>
    </location>
    <ligand>
        <name>substrate</name>
    </ligand>
</feature>
<feature type="binding site">
    <location>
        <begin position="191"/>
        <end position="192"/>
    </location>
    <ligand>
        <name>substrate</name>
    </ligand>
</feature>
<feature type="binding site">
    <location>
        <position position="246"/>
    </location>
    <ligand>
        <name>substrate</name>
    </ligand>
</feature>
<feature type="binding site">
    <location>
        <position position="282"/>
    </location>
    <ligand>
        <name>substrate</name>
    </ligand>
</feature>
<feature type="glycosylation site" description="N-linked (GlcNAc...) asparagine">
    <location>
        <position position="159"/>
    </location>
</feature>
<feature type="glycosylation site" description="N-linked (GlcNAc...) asparagine">
    <location>
        <position position="186"/>
    </location>
</feature>
<feature type="glycosylation site" description="N-linked (GlcNAc...) asparagine">
    <location>
        <position position="342"/>
    </location>
</feature>
<feature type="glycosylation site" description="N-linked (GlcNAc...) asparagine" evidence="1">
    <location>
        <position position="446"/>
    </location>
</feature>
<feature type="disulfide bond">
    <location>
        <begin position="442"/>
        <end position="491"/>
    </location>
</feature>
<feature type="mutagenesis site" description="Loss of activity." evidence="6">
    <original>W</original>
    <variation>L</variation>
    <location>
        <position position="63"/>
    </location>
</feature>
<feature type="mutagenesis site" description="Loss of activity." evidence="6 9">
    <original>D</original>
    <variation>A</variation>
    <location>
        <position position="66"/>
    </location>
</feature>
<feature type="mutagenesis site" description="Loss of activity." evidence="6">
    <original>W</original>
    <variation>L</variation>
    <location>
        <position position="90"/>
    </location>
</feature>
<feature type="mutagenesis site" description="Loss of activity." evidence="6">
    <original>W</original>
    <variation>L</variation>
    <location>
        <position position="125"/>
    </location>
</feature>
<feature type="mutagenesis site" description="Loss of activity." evidence="6 8 9">
    <original>E</original>
    <variation>A</variation>
    <variation>Q</variation>
    <location>
        <position position="246"/>
    </location>
</feature>
<feature type="mutagenesis site" description="Impaired beta-fructofuranosidase activity but enhanced 1-fructan exohydrolase activity." evidence="6 9">
    <original>D</original>
    <variation>A</variation>
    <location>
        <position position="282"/>
    </location>
</feature>
<feature type="mutagenesis site" description="Loss of activity." evidence="6 9">
    <original>D</original>
    <variation>F</variation>
    <location>
        <position position="282"/>
    </location>
</feature>
<feature type="mutagenesis site" description="Normal activity." evidence="6 9">
    <original>D</original>
    <variation>N</variation>
    <location>
        <position position="282"/>
    </location>
</feature>
<feature type="mutagenesis site" description="Slightly reduced activity." evidence="6">
    <original>K</original>
    <variation>L</variation>
    <location>
        <position position="285"/>
    </location>
</feature>
<feature type="mutagenesis site" description="Reduced activity and glycosylation." evidence="5 7">
    <original>N</original>
    <variation>D</variation>
    <location>
        <position position="342"/>
    </location>
</feature>
<feature type="strand" evidence="15">
    <location>
        <begin position="50"/>
        <end position="52"/>
    </location>
</feature>
<feature type="strand" evidence="13">
    <location>
        <begin position="54"/>
        <end position="56"/>
    </location>
</feature>
<feature type="strand" evidence="13">
    <location>
        <begin position="60"/>
        <end position="73"/>
    </location>
</feature>
<feature type="strand" evidence="13">
    <location>
        <begin position="76"/>
        <end position="83"/>
    </location>
</feature>
<feature type="strand" evidence="13">
    <location>
        <begin position="88"/>
        <end position="90"/>
    </location>
</feature>
<feature type="strand" evidence="13">
    <location>
        <begin position="94"/>
        <end position="113"/>
    </location>
</feature>
<feature type="helix" evidence="13">
    <location>
        <begin position="118"/>
        <end position="120"/>
    </location>
</feature>
<feature type="strand" evidence="13">
    <location>
        <begin position="124"/>
        <end position="131"/>
    </location>
</feature>
<feature type="strand" evidence="13">
    <location>
        <begin position="137"/>
        <end position="144"/>
    </location>
</feature>
<feature type="strand" evidence="13">
    <location>
        <begin position="150"/>
        <end position="158"/>
    </location>
</feature>
<feature type="strand" evidence="13">
    <location>
        <begin position="168"/>
        <end position="170"/>
    </location>
</feature>
<feature type="turn" evidence="13">
    <location>
        <begin position="181"/>
        <end position="183"/>
    </location>
</feature>
<feature type="strand" evidence="13">
    <location>
        <begin position="189"/>
        <end position="191"/>
    </location>
</feature>
<feature type="strand" evidence="14">
    <location>
        <begin position="200"/>
        <end position="202"/>
    </location>
</feature>
<feature type="strand" evidence="13">
    <location>
        <begin position="204"/>
        <end position="212"/>
    </location>
</feature>
<feature type="strand" evidence="13">
    <location>
        <begin position="215"/>
        <end position="228"/>
    </location>
</feature>
<feature type="strand" evidence="13">
    <location>
        <begin position="236"/>
        <end position="240"/>
    </location>
</feature>
<feature type="strand" evidence="13">
    <location>
        <begin position="245"/>
        <end position="256"/>
    </location>
</feature>
<feature type="strand" evidence="16">
    <location>
        <begin position="258"/>
        <end position="260"/>
    </location>
</feature>
<feature type="strand" evidence="14">
    <location>
        <begin position="269"/>
        <end position="271"/>
    </location>
</feature>
<feature type="strand" evidence="13">
    <location>
        <begin position="273"/>
        <end position="281"/>
    </location>
</feature>
<feature type="turn" evidence="13">
    <location>
        <begin position="282"/>
        <end position="284"/>
    </location>
</feature>
<feature type="strand" evidence="13">
    <location>
        <begin position="287"/>
        <end position="295"/>
    </location>
</feature>
<feature type="turn" evidence="13">
    <location>
        <begin position="296"/>
        <end position="299"/>
    </location>
</feature>
<feature type="strand" evidence="13">
    <location>
        <begin position="300"/>
        <end position="303"/>
    </location>
</feature>
<feature type="strand" evidence="14">
    <location>
        <begin position="309"/>
        <end position="312"/>
    </location>
</feature>
<feature type="strand" evidence="13">
    <location>
        <begin position="318"/>
        <end position="320"/>
    </location>
</feature>
<feature type="strand" evidence="13">
    <location>
        <begin position="322"/>
        <end position="329"/>
    </location>
</feature>
<feature type="turn" evidence="13">
    <location>
        <begin position="330"/>
        <end position="333"/>
    </location>
</feature>
<feature type="strand" evidence="13">
    <location>
        <begin position="334"/>
        <end position="341"/>
    </location>
</feature>
<feature type="helix" evidence="13">
    <location>
        <begin position="347"/>
        <end position="353"/>
    </location>
</feature>
<feature type="strand" evidence="14">
    <location>
        <begin position="354"/>
        <end position="356"/>
    </location>
</feature>
<feature type="strand" evidence="13">
    <location>
        <begin position="363"/>
        <end position="367"/>
    </location>
</feature>
<feature type="strand" evidence="13">
    <location>
        <begin position="371"/>
        <end position="378"/>
    </location>
</feature>
<feature type="helix" evidence="13">
    <location>
        <begin position="380"/>
        <end position="385"/>
    </location>
</feature>
<feature type="strand" evidence="13">
    <location>
        <begin position="391"/>
        <end position="398"/>
    </location>
</feature>
<feature type="strand" evidence="13">
    <location>
        <begin position="402"/>
        <end position="405"/>
    </location>
</feature>
<feature type="strand" evidence="13">
    <location>
        <begin position="413"/>
        <end position="421"/>
    </location>
</feature>
<feature type="helix" evidence="13">
    <location>
        <begin position="425"/>
        <end position="427"/>
    </location>
</feature>
<feature type="strand" evidence="13">
    <location>
        <begin position="428"/>
        <end position="430"/>
    </location>
</feature>
<feature type="helix" evidence="13">
    <location>
        <begin position="438"/>
        <end position="444"/>
    </location>
</feature>
<feature type="strand" evidence="13">
    <location>
        <begin position="452"/>
        <end position="462"/>
    </location>
</feature>
<feature type="strand" evidence="13">
    <location>
        <begin position="466"/>
        <end position="468"/>
    </location>
</feature>
<feature type="strand" evidence="13">
    <location>
        <begin position="470"/>
        <end position="480"/>
    </location>
</feature>
<feature type="strand" evidence="13">
    <location>
        <begin position="486"/>
        <end position="493"/>
    </location>
</feature>
<feature type="strand" evidence="14">
    <location>
        <begin position="501"/>
        <end position="503"/>
    </location>
</feature>
<feature type="strand" evidence="13">
    <location>
        <begin position="508"/>
        <end position="512"/>
    </location>
</feature>
<feature type="strand" evidence="13">
    <location>
        <begin position="520"/>
        <end position="527"/>
    </location>
</feature>
<feature type="strand" evidence="13">
    <location>
        <begin position="530"/>
        <end position="535"/>
    </location>
</feature>
<feature type="turn" evidence="13">
    <location>
        <begin position="536"/>
        <end position="539"/>
    </location>
</feature>
<feature type="strand" evidence="13">
    <location>
        <begin position="540"/>
        <end position="545"/>
    </location>
</feature>
<feature type="strand" evidence="13">
    <location>
        <begin position="549"/>
        <end position="551"/>
    </location>
</feature>
<feature type="helix" evidence="13">
    <location>
        <begin position="553"/>
        <end position="555"/>
    </location>
</feature>
<feature type="strand" evidence="13">
    <location>
        <begin position="557"/>
        <end position="562"/>
    </location>
</feature>
<feature type="strand" evidence="13">
    <location>
        <begin position="564"/>
        <end position="566"/>
    </location>
</feature>
<feature type="strand" evidence="13">
    <location>
        <begin position="568"/>
        <end position="578"/>
    </location>
</feature>
<gene>
    <name type="primary">CWINV1</name>
    <name type="synonym">BFRUCT1</name>
    <name type="ordered locus">At3g13790</name>
    <name type="ORF">MMM17.26</name>
</gene>
<comment type="function">
    <text evidence="6 11">Beta-fructofuranosidase that can use sucrose and 1-kestose, and, to a lower extent, neokestose and levan, as substrates, but not inuline.</text>
</comment>
<comment type="catalytic activity">
    <reaction evidence="2">
        <text>Hydrolysis of terminal non-reducing beta-D-fructofuranoside residues in beta-D-fructofuranosides.</text>
        <dbReference type="EC" id="3.2.1.26"/>
    </reaction>
</comment>
<comment type="biophysicochemical properties">
    <kinetics>
        <KM evidence="6">0.35 mM for sucrose (at pH 5 and 30 degrees Celsius)</KM>
        <KM evidence="6">1 mM for 1-kestose (at pH 5 and 30 degrees Celsius)</KM>
    </kinetics>
</comment>
<comment type="interaction">
    <interactant intactId="EBI-15879417">
        <id>Q43866</id>
    </interactant>
    <interactant intactId="EBI-15879452">
        <id>O49908</id>
        <label>LOC107808322</label>
    </interactant>
    <organismsDiffer>true</organismsDiffer>
    <experiments>3</experiments>
</comment>
<comment type="subcellular location">
    <subcellularLocation>
        <location evidence="12">Secreted</location>
        <location evidence="12">Extracellular space</location>
        <location evidence="12">Apoplast</location>
    </subcellularLocation>
    <subcellularLocation>
        <location evidence="12">Secreted</location>
        <location evidence="12">Cell wall</location>
    </subcellularLocation>
    <text evidence="12">Associated to the cell wall.</text>
</comment>
<comment type="alternative products">
    <event type="alternative splicing"/>
    <isoform>
        <id>Q43866-1</id>
        <name>1</name>
        <sequence type="displayed"/>
    </isoform>
    <text>A number of isoforms are produced. According to EST sequences.</text>
</comment>
<comment type="tissue specificity">
    <text evidence="3 4 10">Expressed in seedlings, leaves, flowers, and seeds.</text>
</comment>
<comment type="induction">
    <text evidence="4 10">By wounding, aeroponic growth condition, darkness, sucrose, glucose and mannitol.</text>
</comment>
<comment type="similarity">
    <text evidence="12">Belongs to the glycosyl hydrolase 32 family.</text>
</comment>
<comment type="sequence caution" evidence="12">
    <conflict type="erroneous gene model prediction">
        <sequence resource="EMBL-CDS" id="BAB01930"/>
    </conflict>
</comment>
<organism>
    <name type="scientific">Arabidopsis thaliana</name>
    <name type="common">Mouse-ear cress</name>
    <dbReference type="NCBI Taxonomy" id="3702"/>
    <lineage>
        <taxon>Eukaryota</taxon>
        <taxon>Viridiplantae</taxon>
        <taxon>Streptophyta</taxon>
        <taxon>Embryophyta</taxon>
        <taxon>Tracheophyta</taxon>
        <taxon>Spermatophyta</taxon>
        <taxon>Magnoliopsida</taxon>
        <taxon>eudicotyledons</taxon>
        <taxon>Gunneridae</taxon>
        <taxon>Pentapetalae</taxon>
        <taxon>rosids</taxon>
        <taxon>malvids</taxon>
        <taxon>Brassicales</taxon>
        <taxon>Brassicaceae</taxon>
        <taxon>Camelineae</taxon>
        <taxon>Arabidopsis</taxon>
    </lineage>
</organism>
<reference key="1">
    <citation type="journal article" date="1994" name="Plant Physiol.">
        <title>Arabidopsis gene and cDNA encoding cell-wall invertase.</title>
        <authorList>
            <person name="Schwebel-Dugue N."/>
            <person name="el Mtili N."/>
            <person name="Krivitzky M."/>
            <person name="Jean-Jacques I."/>
            <person name="Williams J.H."/>
            <person name="Thomas M."/>
            <person name="Kreis M."/>
            <person name="Lecharny A."/>
        </authorList>
    </citation>
    <scope>NUCLEOTIDE SEQUENCE [MRNA]</scope>
    <source>
        <strain>cv. Columbia</strain>
        <tissue>Leaf</tissue>
    </source>
</reference>
<reference key="2">
    <citation type="journal article" date="2000" name="DNA Res.">
        <title>Structural analysis of Arabidopsis thaliana chromosome 3. II. Sequence features of the 4,251,695 bp regions covered by 90 P1, TAC and BAC clones.</title>
        <authorList>
            <person name="Kaneko T."/>
            <person name="Katoh T."/>
            <person name="Sato S."/>
            <person name="Nakamura Y."/>
            <person name="Asamizu E."/>
            <person name="Tabata S."/>
        </authorList>
    </citation>
    <scope>NUCLEOTIDE SEQUENCE [LARGE SCALE GENOMIC DNA]</scope>
    <source>
        <strain>cv. Columbia</strain>
    </source>
</reference>
<reference key="3">
    <citation type="journal article" date="2017" name="Plant J.">
        <title>Araport11: a complete reannotation of the Arabidopsis thaliana reference genome.</title>
        <authorList>
            <person name="Cheng C.Y."/>
            <person name="Krishnakumar V."/>
            <person name="Chan A.P."/>
            <person name="Thibaud-Nissen F."/>
            <person name="Schobel S."/>
            <person name="Town C.D."/>
        </authorList>
    </citation>
    <scope>GENOME REANNOTATION</scope>
    <source>
        <strain>cv. Columbia</strain>
    </source>
</reference>
<reference key="4">
    <citation type="journal article" date="2003" name="Science">
        <title>Empirical analysis of transcriptional activity in the Arabidopsis genome.</title>
        <authorList>
            <person name="Yamada K."/>
            <person name="Lim J."/>
            <person name="Dale J.M."/>
            <person name="Chen H."/>
            <person name="Shinn P."/>
            <person name="Palm C.J."/>
            <person name="Southwick A.M."/>
            <person name="Wu H.C."/>
            <person name="Kim C.J."/>
            <person name="Nguyen M."/>
            <person name="Pham P.K."/>
            <person name="Cheuk R.F."/>
            <person name="Karlin-Newmann G."/>
            <person name="Liu S.X."/>
            <person name="Lam B."/>
            <person name="Sakano H."/>
            <person name="Wu T."/>
            <person name="Yu G."/>
            <person name="Miranda M."/>
            <person name="Quach H.L."/>
            <person name="Tripp M."/>
            <person name="Chang C.H."/>
            <person name="Lee J.M."/>
            <person name="Toriumi M.J."/>
            <person name="Chan M.M."/>
            <person name="Tang C.C."/>
            <person name="Onodera C.S."/>
            <person name="Deng J.M."/>
            <person name="Akiyama K."/>
            <person name="Ansari Y."/>
            <person name="Arakawa T."/>
            <person name="Banh J."/>
            <person name="Banno F."/>
            <person name="Bowser L."/>
            <person name="Brooks S.Y."/>
            <person name="Carninci P."/>
            <person name="Chao Q."/>
            <person name="Choy N."/>
            <person name="Enju A."/>
            <person name="Goldsmith A.D."/>
            <person name="Gurjal M."/>
            <person name="Hansen N.F."/>
            <person name="Hayashizaki Y."/>
            <person name="Johnson-Hopson C."/>
            <person name="Hsuan V.W."/>
            <person name="Iida K."/>
            <person name="Karnes M."/>
            <person name="Khan S."/>
            <person name="Koesema E."/>
            <person name="Ishida J."/>
            <person name="Jiang P.X."/>
            <person name="Jones T."/>
            <person name="Kawai J."/>
            <person name="Kamiya A."/>
            <person name="Meyers C."/>
            <person name="Nakajima M."/>
            <person name="Narusaka M."/>
            <person name="Seki M."/>
            <person name="Sakurai T."/>
            <person name="Satou M."/>
            <person name="Tamse R."/>
            <person name="Vaysberg M."/>
            <person name="Wallender E.K."/>
            <person name="Wong C."/>
            <person name="Yamamura Y."/>
            <person name="Yuan S."/>
            <person name="Shinozaki K."/>
            <person name="Davis R.W."/>
            <person name="Theologis A."/>
            <person name="Ecker J.R."/>
        </authorList>
    </citation>
    <scope>NUCLEOTIDE SEQUENCE [LARGE SCALE MRNA]</scope>
    <source>
        <strain>cv. Columbia</strain>
    </source>
</reference>
<reference key="5">
    <citation type="journal article" date="1998" name="Planta">
        <title>Expression of the Arabidopsis thaliana invertase gene family.</title>
        <authorList>
            <person name="Tymowska-Lalanne Z."/>
            <person name="Kreis M."/>
        </authorList>
    </citation>
    <scope>TISSUE SPECIFICITY</scope>
    <scope>INDUCTION</scope>
</reference>
<reference key="6">
    <citation type="journal article" date="2003" name="J. Exp. Bot.">
        <title>Roles of cell-wall invertases and monosaccharide transporters in the growth and development of Arabidopsis.</title>
        <authorList>
            <person name="Sherson S.M."/>
            <person name="Alford H.L."/>
            <person name="Forbes S.M."/>
            <person name="Wallace G."/>
            <person name="Smith S.M."/>
        </authorList>
    </citation>
    <scope>TISSUE SPECIFICITY</scope>
    <scope>GENE FAMILY</scope>
    <scope>NOMENCLATURE</scope>
</reference>
<reference key="7">
    <citation type="journal article" date="2005" name="Plant Cell Environ.">
        <title>Arabidopsis AtcwINV3 and 6 are not invertases but are fructan exohydrolases (FEHs) with different substrate specificities.</title>
        <authorList>
            <person name="de Coninck B."/>
            <person name="Le Roy K."/>
            <person name="Francis I."/>
            <person name="Clerens S."/>
            <person name="Vergauwen R."/>
            <person name="Halliday A.M."/>
            <person name="Smith S.M."/>
            <person name="Van Laere A."/>
            <person name="Van Den Ende W."/>
        </authorList>
    </citation>
    <scope>FUNCTION</scope>
</reference>
<reference key="8">
    <citation type="journal article" date="2006" name="J. Exp. Bot.">
        <title>Imaging photosynthesis in wounded leaves of Arabidopsis thaliana.</title>
        <authorList>
            <person name="Quilliam R.S."/>
            <person name="Swarbrick P.J."/>
            <person name="Scholes J.D."/>
            <person name="Rolfe S.A."/>
        </authorList>
    </citation>
    <scope>TISSUE SPECIFICITY</scope>
    <scope>INDUCTION BY WOUNDING</scope>
</reference>
<reference key="9">
    <citation type="journal article" date="2007" name="Plant Physiol.">
        <title>Unraveling the difference between invertases and fructan exohydrolases: a single amino acid (Asp-239) substitution transforms Arabidopsis cell wall invertase1 into a fructan 1-exohydrolase.</title>
        <authorList>
            <person name="Le Roy K."/>
            <person name="Lammens W."/>
            <person name="Verhaest M."/>
            <person name="De Coninck B."/>
            <person name="Rabijns A."/>
            <person name="Van Laere A."/>
            <person name="Van den Ende W."/>
        </authorList>
    </citation>
    <scope>FUNCTION</scope>
    <scope>MUTAGENESIS OF TRP-63; ASP-66; TRP-90; TRP-125; GLU-246; ASP-282 AND LYS-285</scope>
    <scope>BIOPHYSICOCHEMICAL PROPERTIES</scope>
    <scope>SUBSTRATE BINDING</scope>
</reference>
<reference key="10">
    <citation type="journal article" date="2007" name="New Phytol.">
        <title>N-glycosylation affects substrate specificity of chicory fructan 1-exohydrolase: evidence for the presence of an inulin binding cleft.</title>
        <authorList>
            <person name="Le Roy K."/>
            <person name="Verhaest M."/>
            <person name="Rabijns A."/>
            <person name="Clerens S."/>
            <person name="Van Laere A."/>
            <person name="Van den Ende W."/>
        </authorList>
    </citation>
    <scope>MUTAGENESIS OF ASN-342</scope>
</reference>
<reference key="11">
    <citation type="journal article" date="2006" name="Acta Crystallogr. D">
        <title>X-ray diffraction structure of a cell-wall invertase from Arabidopsis thaliana.</title>
        <authorList>
            <person name="Verhaest M."/>
            <person name="Lammens W."/>
            <person name="Le Roy K."/>
            <person name="De Coninck B."/>
            <person name="De Ranter C.J."/>
            <person name="Van Laere A."/>
            <person name="Van den Ende W."/>
            <person name="Rabijns A."/>
        </authorList>
    </citation>
    <scope>X-RAY CRYSTALLOGRAPHY (2.15 ANGSTROMS) OF 44-584 IN COMPLEX WITH SUBSTRATES</scope>
    <scope>MUTAGENESIS OF ASN-342</scope>
    <scope>GLYCOSYLATION</scope>
</reference>
<reference key="12">
    <citation type="journal article" date="2008" name="J. Mol. Biol.">
        <title>Crystal structures of Arabidopsis thaliana cell-wall invertase mutants in complex with sucrose.</title>
        <authorList>
            <person name="Lammens W."/>
            <person name="Le Roy K."/>
            <person name="Van Laere A."/>
            <person name="Rabijns A."/>
            <person name="Van den Ende W."/>
        </authorList>
    </citation>
    <scope>X-RAY CRYSTALLOGRAPHY (2.8 ANGSTROMS) OF 48-584 IN COMPLEX WITH SUBSTRATES</scope>
    <scope>MUTAGENESIS OF ASP-66; GLU-246 AND ASP-282</scope>
    <scope>GLYCOSYLATION</scope>
</reference>
<reference key="13">
    <citation type="journal article" date="2008" name="Proteins">
        <title>An alternate sucrose binding mode in the E203Q Arabidopsis invertase mutant: an X-ray crystallography and docking study.</title>
        <authorList>
            <person name="Matrai J."/>
            <person name="Lammens W."/>
            <person name="Jonckheer A."/>
            <person name="Le Roy K."/>
            <person name="Rabijns A."/>
            <person name="Van den Ende W."/>
            <person name="De Maeyer M."/>
        </authorList>
    </citation>
    <scope>X-RAY CRYSTALLOGRAPHY (2.6 ANGSTROMS) OF 48-584 IN COMPLEX WITH SUBSTRATES</scope>
    <scope>MUTAGENESIS OF GLU-246</scope>
    <scope>GLYCOSYLATION</scope>
</reference>
<proteinExistence type="evidence at protein level"/>
<accession>Q43866</accession>
<accession>Q9LIB8</accession>
<keyword id="KW-0002">3D-structure</keyword>
<keyword id="KW-0025">Alternative splicing</keyword>
<keyword id="KW-0052">Apoplast</keyword>
<keyword id="KW-0134">Cell wall</keyword>
<keyword id="KW-1015">Disulfide bond</keyword>
<keyword id="KW-0325">Glycoprotein</keyword>
<keyword id="KW-0326">Glycosidase</keyword>
<keyword id="KW-0378">Hydrolase</keyword>
<keyword id="KW-1185">Reference proteome</keyword>
<keyword id="KW-0964">Secreted</keyword>
<keyword id="KW-0732">Signal</keyword>
<protein>
    <recommendedName>
        <fullName>Beta-fructofuranosidase, insoluble isoenzyme CWINV1</fullName>
        <ecNumber>3.2.1.26</ecNumber>
    </recommendedName>
    <alternativeName>
        <fullName>Cell wall beta-fructosidase 1</fullName>
        <shortName>AtbetaFRUCT1</shortName>
    </alternativeName>
    <alternativeName>
        <fullName>Cell wall invertase 1</fullName>
        <shortName>AtcwINV1</shortName>
    </alternativeName>
    <alternativeName>
        <fullName>Sucrose hydrolase 1</fullName>
    </alternativeName>
</protein>
<name>INV1_ARATH</name>